<organism>
    <name type="scientific">Rattus norvegicus</name>
    <name type="common">Rat</name>
    <dbReference type="NCBI Taxonomy" id="10116"/>
    <lineage>
        <taxon>Eukaryota</taxon>
        <taxon>Metazoa</taxon>
        <taxon>Chordata</taxon>
        <taxon>Craniata</taxon>
        <taxon>Vertebrata</taxon>
        <taxon>Euteleostomi</taxon>
        <taxon>Mammalia</taxon>
        <taxon>Eutheria</taxon>
        <taxon>Euarchontoglires</taxon>
        <taxon>Glires</taxon>
        <taxon>Rodentia</taxon>
        <taxon>Myomorpha</taxon>
        <taxon>Muroidea</taxon>
        <taxon>Muridae</taxon>
        <taxon>Murinae</taxon>
        <taxon>Rattus</taxon>
    </lineage>
</organism>
<reference key="1">
    <citation type="journal article" date="1995" name="Eur. J. Biochem.">
        <title>cDNA cloning of BR gamma, a novel brain-specific isoform of the B regulatory subunit of type-2A protein phosphatase.</title>
        <authorList>
            <person name="Akiyama N."/>
            <person name="Shima H."/>
            <person name="Hatano Y."/>
            <person name="Osawa Y."/>
            <person name="Sugimura T."/>
            <person name="Nagao M."/>
        </authorList>
    </citation>
    <scope>NUCLEOTIDE SEQUENCE [MRNA] (ISOFORM 1)</scope>
    <source>
        <strain>Sprague-Dawley</strain>
        <tissue>Brain</tissue>
    </source>
</reference>
<reference key="2">
    <citation type="journal article" date="2003" name="J. Biol. Chem.">
        <title>A developmentally regulated, neuron-specific splice variant of the variable subunit Bbeta targets protein phosphatase 2A to mitochondria and modulates apoptosis.</title>
        <authorList>
            <person name="Dagda R.K."/>
            <person name="Zaucha J.A."/>
            <person name="Wadzinski B.E."/>
            <person name="Strack S."/>
        </authorList>
    </citation>
    <scope>NUCLEOTIDE SEQUENCE [MRNA] (ISOFORM 2)</scope>
    <scope>FUNCTION</scope>
    <scope>INDUCTION</scope>
    <scope>MUTAGENESIS OF 165-ARG-ARG-166</scope>
    <scope>SUBCELLULAR LOCATION</scope>
    <scope>TISSUE SPECIFICITY</scope>
    <source>
        <strain>Sprague-Dawley</strain>
        <tissue>Brain</tissue>
    </source>
</reference>
<reference key="3">
    <citation type="journal article" date="2004" name="Genome Res.">
        <title>The status, quality, and expansion of the NIH full-length cDNA project: the Mammalian Gene Collection (MGC).</title>
        <authorList>
            <consortium name="The MGC Project Team"/>
        </authorList>
    </citation>
    <scope>NUCLEOTIDE SEQUENCE [LARGE SCALE MRNA] (ISOFORM 1)</scope>
    <source>
        <tissue>Testis</tissue>
    </source>
</reference>
<reference key="4">
    <citation type="journal article" date="1993" name="FEBS Lett.">
        <title>Expression of PP2A B regulatory subunit beta isotype in rat testis.</title>
        <authorList>
            <person name="Hatano Y."/>
            <person name="Shima H."/>
            <person name="Haneji T."/>
            <person name="Miura A.B."/>
            <person name="Sugimura T."/>
            <person name="Nagao M."/>
        </authorList>
    </citation>
    <scope>NUCLEOTIDE SEQUENCE [MRNA] OF 8-177 (ISOFORM 1)</scope>
    <scope>TISSUE SPECIFICITY</scope>
    <source>
        <tissue>Testis</tissue>
    </source>
</reference>
<reference key="5">
    <citation type="journal article" date="2005" name="J. Biol. Chem.">
        <title>Unfolding-resistant translocase targeting: a novel mechanism for outer mitochondrial membrane localization exemplified by the Bbeta2 regulatory subunit of protein phosphatase 2A.</title>
        <authorList>
            <person name="Dagda R.K."/>
            <person name="Barwacz C.A."/>
            <person name="Cribbs J.T."/>
            <person name="Strack S."/>
        </authorList>
    </citation>
    <scope>INTERACTION WITH TOMM22</scope>
    <scope>MUTAGENESIS OF ISOFORM 2</scope>
    <scope>SUBCELLULAR LOCATION</scope>
</reference>
<reference key="6">
    <citation type="journal article" date="2006" name="Proc. Natl. Acad. Sci. U.S.A.">
        <title>Quantitative phosphoproteomics of vasopressin-sensitive renal cells: regulation of aquaporin-2 phosphorylation at two sites.</title>
        <authorList>
            <person name="Hoffert J.D."/>
            <person name="Pisitkun T."/>
            <person name="Wang G."/>
            <person name="Shen R.-F."/>
            <person name="Knepper M.A."/>
        </authorList>
    </citation>
    <scope>PHOSPHORYLATION [LARGE SCALE ANALYSIS] AT SER-275; TYR-295 AND THR-298</scope>
    <scope>IDENTIFICATION BY MASS SPECTROMETRY [LARGE SCALE ANALYSIS]</scope>
</reference>
<reference key="7">
    <citation type="journal article" date="2008" name="J. Biol. Chem.">
        <title>The spinocerebellar ataxia 12 gene product and protein phosphatase 2A regulatory subunit Bbeta2 antagonizes neuronal survival by promoting mitochondrial fission.</title>
        <authorList>
            <person name="Dagda R.K."/>
            <person name="Merrill R.A."/>
            <person name="Cribbs J.T."/>
            <person name="Chen Y."/>
            <person name="Hell J.W."/>
            <person name="Usachev Y.M."/>
            <person name="Strack S."/>
        </authorList>
    </citation>
    <scope>FUNCTION</scope>
    <scope>SUBCELLULAR LOCATION</scope>
</reference>
<keyword id="KW-0025">Alternative splicing</keyword>
<keyword id="KW-0053">Apoptosis</keyword>
<keyword id="KW-0963">Cytoplasm</keyword>
<keyword id="KW-0206">Cytoskeleton</keyword>
<keyword id="KW-0472">Membrane</keyword>
<keyword id="KW-0496">Mitochondrion</keyword>
<keyword id="KW-1000">Mitochondrion outer membrane</keyword>
<keyword id="KW-0597">Phosphoprotein</keyword>
<keyword id="KW-1185">Reference proteome</keyword>
<keyword id="KW-0677">Repeat</keyword>
<keyword id="KW-0853">WD repeat</keyword>
<feature type="chain" id="PRO_0000071427" description="Serine/threonine-protein phosphatase 2A 55 kDa regulatory subunit B beta isoform">
    <location>
        <begin position="1"/>
        <end position="443"/>
    </location>
</feature>
<feature type="repeat" description="WD 1">
    <location>
        <begin position="22"/>
        <end position="61"/>
    </location>
</feature>
<feature type="repeat" description="WD 2">
    <location>
        <begin position="87"/>
        <end position="128"/>
    </location>
</feature>
<feature type="repeat" description="WD 3">
    <location>
        <begin position="171"/>
        <end position="209"/>
    </location>
</feature>
<feature type="repeat" description="WD 4">
    <location>
        <begin position="220"/>
        <end position="260"/>
    </location>
</feature>
<feature type="repeat" description="WD 5">
    <location>
        <begin position="279"/>
        <end position="317"/>
    </location>
</feature>
<feature type="repeat" description="WD 6">
    <location>
        <begin position="334"/>
        <end position="375"/>
    </location>
</feature>
<feature type="repeat" description="WD 7">
    <location>
        <begin position="410"/>
        <end position="442"/>
    </location>
</feature>
<feature type="modified residue" description="Phosphoserine" evidence="9">
    <location>
        <position position="275"/>
    </location>
</feature>
<feature type="modified residue" description="Phosphotyrosine" evidence="9">
    <location>
        <position position="295"/>
    </location>
</feature>
<feature type="modified residue" description="Phosphothreonine" evidence="9">
    <location>
        <position position="298"/>
    </location>
</feature>
<feature type="splice variant" id="VSP_037984" description="In isoform 2." evidence="7">
    <original>MEEDIDTRKINNSFLRDHSYA</original>
    <variation>MKCFSRYLPYIFRPPNTILSSSCH</variation>
    <location>
        <begin position="1"/>
        <end position="21"/>
    </location>
</feature>
<feature type="mutagenesis site" description="Inhibits incorporation into the PP2A holoenzyme complex and proapoptotic activity." evidence="3">
    <original>RR</original>
    <variation>EE</variation>
    <location>
        <begin position="165"/>
        <end position="166"/>
    </location>
</feature>
<dbReference type="EMBL" id="D38260">
    <property type="protein sequence ID" value="BAA07412.1"/>
    <property type="molecule type" value="mRNA"/>
</dbReference>
<dbReference type="EMBL" id="AY251277">
    <property type="protein sequence ID" value="AAP33142.1"/>
    <property type="molecule type" value="mRNA"/>
</dbReference>
<dbReference type="EMBL" id="BC078834">
    <property type="protein sequence ID" value="AAH78834.1"/>
    <property type="molecule type" value="mRNA"/>
</dbReference>
<dbReference type="EMBL" id="D14421">
    <property type="protein sequence ID" value="BAA03313.1"/>
    <property type="molecule type" value="mRNA"/>
</dbReference>
<dbReference type="PIR" id="S33257">
    <property type="entry name" value="S33257"/>
</dbReference>
<dbReference type="RefSeq" id="NP_001389311.1">
    <molecule id="P36877-1"/>
    <property type="nucleotide sequence ID" value="NM_001402382.1"/>
</dbReference>
<dbReference type="RefSeq" id="NP_071545.2">
    <molecule id="P36877-2"/>
    <property type="nucleotide sequence ID" value="NM_022209.4"/>
</dbReference>
<dbReference type="RefSeq" id="XP_017456514.1">
    <property type="nucleotide sequence ID" value="XM_017601025.1"/>
</dbReference>
<dbReference type="SMR" id="P36877"/>
<dbReference type="FunCoup" id="P36877">
    <property type="interactions" value="1915"/>
</dbReference>
<dbReference type="IntAct" id="P36877">
    <property type="interactions" value="1"/>
</dbReference>
<dbReference type="MINT" id="P36877"/>
<dbReference type="STRING" id="10116.ENSRNOP00000071716"/>
<dbReference type="iPTMnet" id="P36877"/>
<dbReference type="PhosphoSitePlus" id="P36877"/>
<dbReference type="jPOST" id="P36877"/>
<dbReference type="PaxDb" id="10116-ENSRNOP00000041264"/>
<dbReference type="Ensembl" id="ENSRNOT00000079585.2">
    <molecule id="P36877-1"/>
    <property type="protein sequence ID" value="ENSRNOP00000071824.1"/>
    <property type="gene ID" value="ENSRNOG00000018851.8"/>
</dbReference>
<dbReference type="Ensembl" id="ENSRNOT00000107651.1">
    <molecule id="P36877-2"/>
    <property type="protein sequence ID" value="ENSRNOP00000077436.1"/>
    <property type="gene ID" value="ENSRNOG00000018851.8"/>
</dbReference>
<dbReference type="GeneID" id="60660"/>
<dbReference type="KEGG" id="rno:60660"/>
<dbReference type="UCSC" id="RGD:631441">
    <molecule id="P36877-1"/>
    <property type="organism name" value="rat"/>
</dbReference>
<dbReference type="AGR" id="RGD:631441"/>
<dbReference type="CTD" id="5521"/>
<dbReference type="RGD" id="631441">
    <property type="gene designation" value="Ppp2r2b"/>
</dbReference>
<dbReference type="eggNOG" id="KOG1354">
    <property type="taxonomic scope" value="Eukaryota"/>
</dbReference>
<dbReference type="GeneTree" id="ENSGT00950000182864"/>
<dbReference type="InParanoid" id="P36877"/>
<dbReference type="TreeFam" id="TF105553"/>
<dbReference type="PRO" id="PR:P36877"/>
<dbReference type="Proteomes" id="UP000002494">
    <property type="component" value="Chromosome 18"/>
</dbReference>
<dbReference type="Bgee" id="ENSRNOG00000018851">
    <property type="expression patterns" value="Expressed in frontal cortex and 18 other cell types or tissues"/>
</dbReference>
<dbReference type="ExpressionAtlas" id="P36877">
    <property type="expression patterns" value="baseline and differential"/>
</dbReference>
<dbReference type="GO" id="GO:0005737">
    <property type="term" value="C:cytoplasm"/>
    <property type="evidence" value="ECO:0000314"/>
    <property type="project" value="UniProtKB"/>
</dbReference>
<dbReference type="GO" id="GO:0005856">
    <property type="term" value="C:cytoskeleton"/>
    <property type="evidence" value="ECO:0007669"/>
    <property type="project" value="UniProtKB-SubCell"/>
</dbReference>
<dbReference type="GO" id="GO:0005829">
    <property type="term" value="C:cytosol"/>
    <property type="evidence" value="ECO:0000318"/>
    <property type="project" value="GO_Central"/>
</dbReference>
<dbReference type="GO" id="GO:0005741">
    <property type="term" value="C:mitochondrial outer membrane"/>
    <property type="evidence" value="ECO:0000314"/>
    <property type="project" value="UniProtKB"/>
</dbReference>
<dbReference type="GO" id="GO:0005739">
    <property type="term" value="C:mitochondrion"/>
    <property type="evidence" value="ECO:0000314"/>
    <property type="project" value="UniProtKB"/>
</dbReference>
<dbReference type="GO" id="GO:0000159">
    <property type="term" value="C:protein phosphatase type 2A complex"/>
    <property type="evidence" value="ECO:0000314"/>
    <property type="project" value="UniProtKB"/>
</dbReference>
<dbReference type="GO" id="GO:0019888">
    <property type="term" value="F:protein phosphatase regulator activity"/>
    <property type="evidence" value="ECO:0000318"/>
    <property type="project" value="GO_Central"/>
</dbReference>
<dbReference type="GO" id="GO:0044877">
    <property type="term" value="F:protein-containing complex binding"/>
    <property type="evidence" value="ECO:0000314"/>
    <property type="project" value="RGD"/>
</dbReference>
<dbReference type="GO" id="GO:0000266">
    <property type="term" value="P:mitochondrial fission"/>
    <property type="evidence" value="ECO:0000314"/>
    <property type="project" value="RGD"/>
</dbReference>
<dbReference type="GO" id="GO:0043653">
    <property type="term" value="P:mitochondrial fragmentation involved in apoptotic process"/>
    <property type="evidence" value="ECO:0000315"/>
    <property type="project" value="RGD"/>
</dbReference>
<dbReference type="GO" id="GO:0030182">
    <property type="term" value="P:neuron differentiation"/>
    <property type="evidence" value="ECO:0000270"/>
    <property type="project" value="RGD"/>
</dbReference>
<dbReference type="GO" id="GO:0043525">
    <property type="term" value="P:positive regulation of neuron apoptotic process"/>
    <property type="evidence" value="ECO:0000314"/>
    <property type="project" value="UniProtKB"/>
</dbReference>
<dbReference type="GO" id="GO:0006626">
    <property type="term" value="P:protein targeting to mitochondrion"/>
    <property type="evidence" value="ECO:0000315"/>
    <property type="project" value="RGD"/>
</dbReference>
<dbReference type="GO" id="GO:0007286">
    <property type="term" value="P:spermatid development"/>
    <property type="evidence" value="ECO:0000270"/>
    <property type="project" value="RGD"/>
</dbReference>
<dbReference type="FunFam" id="2.130.10.10:FF:000002">
    <property type="entry name" value="Serine/threonine-protein phosphatase 2A 55 kDa regulatory subunit B"/>
    <property type="match status" value="1"/>
</dbReference>
<dbReference type="Gene3D" id="2.130.10.10">
    <property type="entry name" value="YVTN repeat-like/Quinoprotein amine dehydrogenase"/>
    <property type="match status" value="1"/>
</dbReference>
<dbReference type="InterPro" id="IPR000009">
    <property type="entry name" value="PP2A_PR55"/>
</dbReference>
<dbReference type="InterPro" id="IPR018067">
    <property type="entry name" value="PP2A_PR55_CS"/>
</dbReference>
<dbReference type="InterPro" id="IPR015943">
    <property type="entry name" value="WD40/YVTN_repeat-like_dom_sf"/>
</dbReference>
<dbReference type="InterPro" id="IPR036322">
    <property type="entry name" value="WD40_repeat_dom_sf"/>
</dbReference>
<dbReference type="InterPro" id="IPR001680">
    <property type="entry name" value="WD40_rpt"/>
</dbReference>
<dbReference type="PANTHER" id="PTHR11871">
    <property type="entry name" value="PROTEIN PHOSPHATASE PP2A REGULATORY SUBUNIT B"/>
    <property type="match status" value="1"/>
</dbReference>
<dbReference type="PIRSF" id="PIRSF037309">
    <property type="entry name" value="PP2A_PR55"/>
    <property type="match status" value="1"/>
</dbReference>
<dbReference type="PRINTS" id="PR00600">
    <property type="entry name" value="PP2APR55"/>
</dbReference>
<dbReference type="SMART" id="SM00320">
    <property type="entry name" value="WD40"/>
    <property type="match status" value="6"/>
</dbReference>
<dbReference type="SUPFAM" id="SSF50978">
    <property type="entry name" value="WD40 repeat-like"/>
    <property type="match status" value="1"/>
</dbReference>
<dbReference type="PROSITE" id="PS01024">
    <property type="entry name" value="PR55_1"/>
    <property type="match status" value="1"/>
</dbReference>
<dbReference type="PROSITE" id="PS01025">
    <property type="entry name" value="PR55_2"/>
    <property type="match status" value="1"/>
</dbReference>
<dbReference type="PROSITE" id="PS00678">
    <property type="entry name" value="WD_REPEATS_1"/>
    <property type="match status" value="1"/>
</dbReference>
<name>2ABB_RAT</name>
<proteinExistence type="evidence at protein level"/>
<sequence length="443" mass="51668">MEEDIDTRKINNSFLRDHSYATEADIISTVEFNHTGELLATGDKGGRVVIFQREQESKNQVHRRGEYNVYSTFQSHEPEFDYLKSLEIEEKINKIRWLPQQNAAYFLLSTNDKTVKLWKVSERDKRPEGYNLKDEEGRLRDPATITTLRVPVLRPMDLMVEATPRRVFANAHTYHINSISVNSDYETYMSADDLRINLWNFEITNQSFNIVDIKPANMEELTEVITAAEFHPHHCNTFVYSSSKGTIRLCDMRASALCDRHTKFFEEPEDPSNRSFFSEIISSISDVKFSHSGRYIMTRDYLTAKVWDLNMENRPVETYQVHDYLRSKLCSLYENDCIFDKFECVWNGSDSVIMTGSYNNFFRMFDRNTKRDVTLEASRENSKPRAILKPRKVCVGGKRRKDEISVDSLDFSKKILHTAWHPSENIIAVAATNNLYIFQDKVN</sequence>
<gene>
    <name type="primary">Ppp2r2b</name>
</gene>
<protein>
    <recommendedName>
        <fullName>Serine/threonine-protein phosphatase 2A 55 kDa regulatory subunit B beta isoform</fullName>
    </recommendedName>
    <alternativeName>
        <fullName>PP2A subunit B isoform B55-beta</fullName>
    </alternativeName>
    <alternativeName>
        <fullName>PP2A subunit B isoform BRB</fullName>
    </alternativeName>
    <alternativeName>
        <fullName>PP2A subunit B isoform PR55-beta</fullName>
    </alternativeName>
    <alternativeName>
        <fullName>PP2A subunit B isoform R2-beta</fullName>
    </alternativeName>
    <alternativeName>
        <fullName>PP2A subunit B isoform beta</fullName>
    </alternativeName>
</protein>
<accession>P36877</accession>
<accession>Q80W84</accession>
<comment type="function">
    <text evidence="3 5">The B regulatory subunit might modulate substrate selectivity and catalytic activity, and might also direct the localization of the catalytic enzyme to a particular subcellular compartment. Within the PP2A holoenzyme complex, isoform 2 is required to promote proapoptotic activity. Isoform 2 regulates neuronal survival through the mitochondrial fission and fusion balance.</text>
</comment>
<comment type="subunit">
    <text evidence="1 2 4">PP2A consists of a common heterodimeric core enzyme, composed of a 36 kDa catalytic subunit (subunit C) and a 65 kDa constant regulatory subunit (PR65 or subunit A), that associates with a variety of regulatory subunits. Proteins that associate with the core dimer include three families of regulatory subunits B (the R2/B/PR55/B55, R3/B''/PR72/PR130/PR59 and R5/B'/B56 families), the 48 kDa variable regulatory subunit, viral proteins, and cell signaling molecules (By similarity). Interacts with IER5 (via N- and C-terminal regions) (By similarity). Interacts with TOMM22 (PubMed:15923182).</text>
</comment>
<comment type="subcellular location">
    <molecule>Isoform 1</molecule>
    <subcellularLocation>
        <location>Cytoplasm</location>
    </subcellularLocation>
    <subcellularLocation>
        <location evidence="1">Cytoplasm</location>
        <location evidence="1">Cytoskeleton</location>
    </subcellularLocation>
    <subcellularLocation>
        <location evidence="1">Membrane</location>
    </subcellularLocation>
</comment>
<comment type="subcellular location">
    <molecule>Isoform 2</molecule>
    <subcellularLocation>
        <location>Cytoplasm</location>
    </subcellularLocation>
    <subcellularLocation>
        <location>Mitochondrion</location>
    </subcellularLocation>
    <subcellularLocation>
        <location>Mitochondrion outer membrane</location>
    </subcellularLocation>
    <text>Under basal conditions, localizes to both cytosolic and mitochondrial compartments. Relocalizes from the cytosolic to the mitochondrial compartment during apoptosis. Its targeting to the outer mitochondrial membrane (OMM) involves an association with import receptors of the TOM complex and is required to promote proapoptotic activity.</text>
</comment>
<comment type="alternative products">
    <event type="alternative splicing"/>
    <isoform>
        <id>P36877-1</id>
        <name>1</name>
        <name>Bbeta</name>
        <name>Bbeta1</name>
        <sequence type="displayed"/>
    </isoform>
    <isoform>
        <id>P36877-2</id>
        <name>2</name>
        <name>Bbeta2</name>
        <sequence type="described" ref="VSP_037984"/>
    </isoform>
</comment>
<comment type="tissue specificity">
    <text evidence="3 6">Expressed in the brain. Isoform 1 and isoform 2 are expressed in the forbrain. Isoform 1 is more strongly expressed than isoform 2 in the olfactory bulb. Isoform 1 and isoform 2 are weakly expressed in the cerebellum. Isoform 1 is expressed in the testis. Isoform 2 expression is undetectable at birth rising to adult level at day 14.</text>
</comment>
<comment type="induction">
    <text evidence="3">Up-regulated postnatally and in response to neuronal differentiation.</text>
</comment>
<comment type="domain">
    <text>The N-terminal 26 residues of isoform 2 constitute a cryptic mitochondrial matrix import signal with critical basic and hydrophobic residues, that is necessary and sufficient for targeting the PP2A holoenzyme to the outer mitochondrial membrane (OMM) and does not affect holoenzyme formation or catalytic activity.</text>
</comment>
<comment type="domain">
    <text>The last WD repeat of isoform 2 constitutes a mitochondrial stop-transfer domain that confers resistance to the unfolding step process required for import and therefore prevents PPP2R2B matrix translocation and signal sequence cleavage.</text>
</comment>
<comment type="miscellaneous">
    <molecule>Isoform 2</molecule>
    <text evidence="8">Contains a cryptic mitochondrial transit peptide at positions 1-23. Mutagenesis of Lys-2 to Ala greatly reduces interaction with TOMM22, the outer mitochondrial membrane (OMM) localization and proapoptotic activity. Mutagenesis of Arg-6 to Ala greatly reduces outer mitochondrial membrane (OMM) localization and proapoptotic activity. Combined mutagenesis of Thy-7 and Leu-8 to Ala or Thy-10 and Ile-11 and Phe-12 to Ala or Ile-18 and Leu-19 to Ala strongly impaired mitochondrial localization and proapoptotic activity. Mutagenesis of Arg-13 to Ala does not inhibit OMM localization and proapoptotic activity. Mutagenesis of Cys-3 to Ala or Ser does not inhibit OMM localization and proapoptotic activity. Mutagenesis of Phe-4 to Ala or Thy-7 to Ala or Leu-8 to Ala or Tyr-10 to Ala or Ile-11 to Ala or Phe-12 to Ala weakly impaired mitochondrial localization and proapoptotic activity.</text>
</comment>
<comment type="similarity">
    <text evidence="8">Belongs to the phosphatase 2A regulatory subunit B family.</text>
</comment>
<evidence type="ECO:0000250" key="1"/>
<evidence type="ECO:0000250" key="2">
    <source>
        <dbReference type="UniProtKB" id="Q00005"/>
    </source>
</evidence>
<evidence type="ECO:0000269" key="3">
    <source>
    </source>
</evidence>
<evidence type="ECO:0000269" key="4">
    <source>
    </source>
</evidence>
<evidence type="ECO:0000269" key="5">
    <source>
    </source>
</evidence>
<evidence type="ECO:0000269" key="6">
    <source>
    </source>
</evidence>
<evidence type="ECO:0000303" key="7">
    <source>
    </source>
</evidence>
<evidence type="ECO:0000305" key="8"/>
<evidence type="ECO:0007744" key="9">
    <source>
    </source>
</evidence>